<keyword id="KW-0963">Cytoplasm</keyword>
<keyword id="KW-0539">Nucleus</keyword>
<keyword id="KW-0647">Proteasome</keyword>
<keyword id="KW-1185">Reference proteome</keyword>
<name>PSB3_SCHPO</name>
<reference key="1">
    <citation type="journal article" date="2002" name="Nature">
        <title>The genome sequence of Schizosaccharomyces pombe.</title>
        <authorList>
            <person name="Wood V."/>
            <person name="Gwilliam R."/>
            <person name="Rajandream M.A."/>
            <person name="Lyne M.H."/>
            <person name="Lyne R."/>
            <person name="Stewart A."/>
            <person name="Sgouros J.G."/>
            <person name="Peat N."/>
            <person name="Hayles J."/>
            <person name="Baker S.G."/>
            <person name="Basham D."/>
            <person name="Bowman S."/>
            <person name="Brooks K."/>
            <person name="Brown D."/>
            <person name="Brown S."/>
            <person name="Chillingworth T."/>
            <person name="Churcher C.M."/>
            <person name="Collins M."/>
            <person name="Connor R."/>
            <person name="Cronin A."/>
            <person name="Davis P."/>
            <person name="Feltwell T."/>
            <person name="Fraser A."/>
            <person name="Gentles S."/>
            <person name="Goble A."/>
            <person name="Hamlin N."/>
            <person name="Harris D.E."/>
            <person name="Hidalgo J."/>
            <person name="Hodgson G."/>
            <person name="Holroyd S."/>
            <person name="Hornsby T."/>
            <person name="Howarth S."/>
            <person name="Huckle E.J."/>
            <person name="Hunt S."/>
            <person name="Jagels K."/>
            <person name="James K.D."/>
            <person name="Jones L."/>
            <person name="Jones M."/>
            <person name="Leather S."/>
            <person name="McDonald S."/>
            <person name="McLean J."/>
            <person name="Mooney P."/>
            <person name="Moule S."/>
            <person name="Mungall K.L."/>
            <person name="Murphy L.D."/>
            <person name="Niblett D."/>
            <person name="Odell C."/>
            <person name="Oliver K."/>
            <person name="O'Neil S."/>
            <person name="Pearson D."/>
            <person name="Quail M.A."/>
            <person name="Rabbinowitsch E."/>
            <person name="Rutherford K.M."/>
            <person name="Rutter S."/>
            <person name="Saunders D."/>
            <person name="Seeger K."/>
            <person name="Sharp S."/>
            <person name="Skelton J."/>
            <person name="Simmonds M.N."/>
            <person name="Squares R."/>
            <person name="Squares S."/>
            <person name="Stevens K."/>
            <person name="Taylor K."/>
            <person name="Taylor R.G."/>
            <person name="Tivey A."/>
            <person name="Walsh S.V."/>
            <person name="Warren T."/>
            <person name="Whitehead S."/>
            <person name="Woodward J.R."/>
            <person name="Volckaert G."/>
            <person name="Aert R."/>
            <person name="Robben J."/>
            <person name="Grymonprez B."/>
            <person name="Weltjens I."/>
            <person name="Vanstreels E."/>
            <person name="Rieger M."/>
            <person name="Schaefer M."/>
            <person name="Mueller-Auer S."/>
            <person name="Gabel C."/>
            <person name="Fuchs M."/>
            <person name="Duesterhoeft A."/>
            <person name="Fritzc C."/>
            <person name="Holzer E."/>
            <person name="Moestl D."/>
            <person name="Hilbert H."/>
            <person name="Borzym K."/>
            <person name="Langer I."/>
            <person name="Beck A."/>
            <person name="Lehrach H."/>
            <person name="Reinhardt R."/>
            <person name="Pohl T.M."/>
            <person name="Eger P."/>
            <person name="Zimmermann W."/>
            <person name="Wedler H."/>
            <person name="Wambutt R."/>
            <person name="Purnelle B."/>
            <person name="Goffeau A."/>
            <person name="Cadieu E."/>
            <person name="Dreano S."/>
            <person name="Gloux S."/>
            <person name="Lelaure V."/>
            <person name="Mottier S."/>
            <person name="Galibert F."/>
            <person name="Aves S.J."/>
            <person name="Xiang Z."/>
            <person name="Hunt C."/>
            <person name="Moore K."/>
            <person name="Hurst S.M."/>
            <person name="Lucas M."/>
            <person name="Rochet M."/>
            <person name="Gaillardin C."/>
            <person name="Tallada V.A."/>
            <person name="Garzon A."/>
            <person name="Thode G."/>
            <person name="Daga R.R."/>
            <person name="Cruzado L."/>
            <person name="Jimenez J."/>
            <person name="Sanchez M."/>
            <person name="del Rey F."/>
            <person name="Benito J."/>
            <person name="Dominguez A."/>
            <person name="Revuelta J.L."/>
            <person name="Moreno S."/>
            <person name="Armstrong J."/>
            <person name="Forsburg S.L."/>
            <person name="Cerutti L."/>
            <person name="Lowe T."/>
            <person name="McCombie W.R."/>
            <person name="Paulsen I."/>
            <person name="Potashkin J."/>
            <person name="Shpakovski G.V."/>
            <person name="Ussery D."/>
            <person name="Barrell B.G."/>
            <person name="Nurse P."/>
        </authorList>
    </citation>
    <scope>NUCLEOTIDE SEQUENCE [LARGE SCALE GENOMIC DNA]</scope>
    <source>
        <strain>972 / ATCC 24843</strain>
    </source>
</reference>
<reference key="2">
    <citation type="journal article" date="2006" name="Nat. Biotechnol.">
        <title>ORFeome cloning and global analysis of protein localization in the fission yeast Schizosaccharomyces pombe.</title>
        <authorList>
            <person name="Matsuyama A."/>
            <person name="Arai R."/>
            <person name="Yashiroda Y."/>
            <person name="Shirai A."/>
            <person name="Kamata A."/>
            <person name="Sekido S."/>
            <person name="Kobayashi Y."/>
            <person name="Hashimoto A."/>
            <person name="Hamamoto M."/>
            <person name="Hiraoka Y."/>
            <person name="Horinouchi S."/>
            <person name="Yoshida M."/>
        </authorList>
    </citation>
    <scope>SUBCELLULAR LOCATION [LARGE SCALE ANALYSIS]</scope>
</reference>
<accession>Q9Y7T8</accession>
<comment type="function">
    <text evidence="1">Non-catalytic component of the proteasome, a multicatalytic proteinase complex which is characterized by its ability to cleave peptides with Arg, Phe, Tyr, Leu, and Glu adjacent to the leaving group at neutral or slightly basic pH. The proteasome has an ATP-dependent proteolytic activity (By similarity).</text>
</comment>
<comment type="subunit">
    <text evidence="1">The 26S proteasome consists of a 20S proteasome core and two 19S regulatory subunits. The 20S proteasome core is composed of 28 subunits that are arranged in four stacked rings, resulting in a barrel-shaped structure. The two end rings are each formed by seven alpha subunits, and the two central rings are each formed by seven beta subunits. The catalytic chamber with the active sites is on the inside of the barrel (By similarity).</text>
</comment>
<comment type="subcellular location">
    <subcellularLocation>
        <location evidence="2 3">Cytoplasm</location>
    </subcellularLocation>
    <subcellularLocation>
        <location evidence="3">Nucleus</location>
    </subcellularLocation>
</comment>
<comment type="similarity">
    <text evidence="2">Belongs to the peptidase T1B family.</text>
</comment>
<evidence type="ECO:0000250" key="1"/>
<evidence type="ECO:0000255" key="2">
    <source>
        <dbReference type="PROSITE-ProRule" id="PRU00809"/>
    </source>
</evidence>
<evidence type="ECO:0000269" key="3">
    <source>
    </source>
</evidence>
<sequence length="204" mass="22661">MSIMEYNGGSCVAMAGKNCVAIASDLRLGVQSISLTNNFPKVFAMGDKTYLGLTGLATDVQTLYELFRYKVNLYKFREERQIQPKTFANLVSSTLYEKRFGPYFSFPVVAGVSNDNTPFICGFDSIGCIDFAEDFIVSGTATEQLYGMCESVYEPNLEPDDLFETISQALLNAQDRDCISGWGCVVYVITADKCIKRLVKGRQD</sequence>
<gene>
    <name type="primary">pup3</name>
    <name type="ORF">SPCC63.12c</name>
</gene>
<proteinExistence type="inferred from homology"/>
<dbReference type="EMBL" id="CU329672">
    <property type="protein sequence ID" value="CAB40016.1"/>
    <property type="molecule type" value="Genomic_DNA"/>
</dbReference>
<dbReference type="PIR" id="T41513">
    <property type="entry name" value="T41513"/>
</dbReference>
<dbReference type="RefSeq" id="NP_587985.1">
    <property type="nucleotide sequence ID" value="NM_001022976.2"/>
</dbReference>
<dbReference type="SMR" id="Q9Y7T8"/>
<dbReference type="BioGRID" id="275966">
    <property type="interactions" value="10"/>
</dbReference>
<dbReference type="ComplexPortal" id="CPX-9077">
    <property type="entry name" value="26S proteasome complex"/>
</dbReference>
<dbReference type="FunCoup" id="Q9Y7T8">
    <property type="interactions" value="706"/>
</dbReference>
<dbReference type="STRING" id="284812.Q9Y7T8"/>
<dbReference type="iPTMnet" id="Q9Y7T8"/>
<dbReference type="PaxDb" id="4896-SPCC63.12c.1"/>
<dbReference type="EnsemblFungi" id="SPCC63.12c.1">
    <property type="protein sequence ID" value="SPCC63.12c.1:pep"/>
    <property type="gene ID" value="SPCC63.12c"/>
</dbReference>
<dbReference type="GeneID" id="2539401"/>
<dbReference type="KEGG" id="spo:2539401"/>
<dbReference type="PomBase" id="SPCC63.12c">
    <property type="gene designation" value="pup3"/>
</dbReference>
<dbReference type="VEuPathDB" id="FungiDB:SPCC63.12c"/>
<dbReference type="eggNOG" id="KOG0180">
    <property type="taxonomic scope" value="Eukaryota"/>
</dbReference>
<dbReference type="HOGENOM" id="CLU_035750_10_0_1"/>
<dbReference type="InParanoid" id="Q9Y7T8"/>
<dbReference type="OMA" id="CSEQLYG"/>
<dbReference type="PhylomeDB" id="Q9Y7T8"/>
<dbReference type="Reactome" id="R-SPO-1236978">
    <property type="pathway name" value="Cross-presentation of soluble exogenous antigens (endosomes)"/>
</dbReference>
<dbReference type="Reactome" id="R-SPO-350562">
    <property type="pathway name" value="Regulation of ornithine decarboxylase (ODC)"/>
</dbReference>
<dbReference type="Reactome" id="R-SPO-5687128">
    <property type="pathway name" value="MAPK6/MAPK4 signaling"/>
</dbReference>
<dbReference type="Reactome" id="R-SPO-5689603">
    <property type="pathway name" value="UCH proteinases"/>
</dbReference>
<dbReference type="Reactome" id="R-SPO-5689880">
    <property type="pathway name" value="Ub-specific processing proteases"/>
</dbReference>
<dbReference type="Reactome" id="R-SPO-68949">
    <property type="pathway name" value="Orc1 removal from chromatin"/>
</dbReference>
<dbReference type="Reactome" id="R-SPO-69017">
    <property type="pathway name" value="CDK-mediated phosphorylation and removal of Cdc6"/>
</dbReference>
<dbReference type="Reactome" id="R-SPO-69601">
    <property type="pathway name" value="Ubiquitin Mediated Degradation of Phosphorylated Cdc25A"/>
</dbReference>
<dbReference type="Reactome" id="R-SPO-75815">
    <property type="pathway name" value="Ubiquitin-dependent degradation of Cyclin D"/>
</dbReference>
<dbReference type="Reactome" id="R-SPO-8854050">
    <property type="pathway name" value="FBXL7 down-regulates AURKA during mitotic entry and in early mitosis"/>
</dbReference>
<dbReference type="Reactome" id="R-SPO-8948751">
    <property type="pathway name" value="Regulation of PTEN stability and activity"/>
</dbReference>
<dbReference type="Reactome" id="R-SPO-8951664">
    <property type="pathway name" value="Neddylation"/>
</dbReference>
<dbReference type="Reactome" id="R-SPO-9755511">
    <property type="pathway name" value="KEAP1-NFE2L2 pathway"/>
</dbReference>
<dbReference type="Reactome" id="R-SPO-983168">
    <property type="pathway name" value="Antigen processing: Ubiquitination &amp; Proteasome degradation"/>
</dbReference>
<dbReference type="Reactome" id="R-SPO-9907900">
    <property type="pathway name" value="Proteasome assembly"/>
</dbReference>
<dbReference type="PRO" id="PR:Q9Y7T8"/>
<dbReference type="Proteomes" id="UP000002485">
    <property type="component" value="Chromosome III"/>
</dbReference>
<dbReference type="GO" id="GO:0005829">
    <property type="term" value="C:cytosol"/>
    <property type="evidence" value="ECO:0007005"/>
    <property type="project" value="PomBase"/>
</dbReference>
<dbReference type="GO" id="GO:0005634">
    <property type="term" value="C:nucleus"/>
    <property type="evidence" value="ECO:0007005"/>
    <property type="project" value="PomBase"/>
</dbReference>
<dbReference type="GO" id="GO:0019774">
    <property type="term" value="C:proteasome core complex, beta-subunit complex"/>
    <property type="evidence" value="ECO:0000250"/>
    <property type="project" value="UniProtKB"/>
</dbReference>
<dbReference type="GO" id="GO:0043161">
    <property type="term" value="P:proteasome-mediated ubiquitin-dependent protein catabolic process"/>
    <property type="evidence" value="ECO:0000318"/>
    <property type="project" value="GO_Central"/>
</dbReference>
<dbReference type="CDD" id="cd03759">
    <property type="entry name" value="proteasome_beta_type_3"/>
    <property type="match status" value="1"/>
</dbReference>
<dbReference type="FunFam" id="3.60.20.10:FF:000003">
    <property type="entry name" value="Proteasome subunit beta type-3"/>
    <property type="match status" value="1"/>
</dbReference>
<dbReference type="Gene3D" id="3.60.20.10">
    <property type="entry name" value="Glutamine Phosphoribosylpyrophosphate, subunit 1, domain 1"/>
    <property type="match status" value="1"/>
</dbReference>
<dbReference type="InterPro" id="IPR029055">
    <property type="entry name" value="Ntn_hydrolases_N"/>
</dbReference>
<dbReference type="InterPro" id="IPR033811">
    <property type="entry name" value="Proteasome_beta_3"/>
</dbReference>
<dbReference type="InterPro" id="IPR016050">
    <property type="entry name" value="Proteasome_bsu_CS"/>
</dbReference>
<dbReference type="InterPro" id="IPR001353">
    <property type="entry name" value="Proteasome_sua/b"/>
</dbReference>
<dbReference type="InterPro" id="IPR023333">
    <property type="entry name" value="Proteasome_suB-type"/>
</dbReference>
<dbReference type="PANTHER" id="PTHR32194">
    <property type="entry name" value="METALLOPROTEASE TLDD"/>
    <property type="match status" value="1"/>
</dbReference>
<dbReference type="PANTHER" id="PTHR32194:SF10">
    <property type="entry name" value="PROTEASOME SUBUNIT BETA TYPE-3"/>
    <property type="match status" value="1"/>
</dbReference>
<dbReference type="Pfam" id="PF00227">
    <property type="entry name" value="Proteasome"/>
    <property type="match status" value="1"/>
</dbReference>
<dbReference type="SUPFAM" id="SSF56235">
    <property type="entry name" value="N-terminal nucleophile aminohydrolases (Ntn hydrolases)"/>
    <property type="match status" value="1"/>
</dbReference>
<dbReference type="PROSITE" id="PS00854">
    <property type="entry name" value="PROTEASOME_BETA_1"/>
    <property type="match status" value="1"/>
</dbReference>
<dbReference type="PROSITE" id="PS51476">
    <property type="entry name" value="PROTEASOME_BETA_2"/>
    <property type="match status" value="1"/>
</dbReference>
<protein>
    <recommendedName>
        <fullName>Probable proteasome subunit beta type-3</fullName>
    </recommendedName>
</protein>
<feature type="chain" id="PRO_0000148069" description="Probable proteasome subunit beta type-3">
    <location>
        <begin position="1"/>
        <end position="204"/>
    </location>
</feature>
<organism>
    <name type="scientific">Schizosaccharomyces pombe (strain 972 / ATCC 24843)</name>
    <name type="common">Fission yeast</name>
    <dbReference type="NCBI Taxonomy" id="284812"/>
    <lineage>
        <taxon>Eukaryota</taxon>
        <taxon>Fungi</taxon>
        <taxon>Dikarya</taxon>
        <taxon>Ascomycota</taxon>
        <taxon>Taphrinomycotina</taxon>
        <taxon>Schizosaccharomycetes</taxon>
        <taxon>Schizosaccharomycetales</taxon>
        <taxon>Schizosaccharomycetaceae</taxon>
        <taxon>Schizosaccharomyces</taxon>
    </lineage>
</organism>